<gene>
    <name evidence="1" type="primary">mgsA</name>
    <name type="ordered locus">SPA1774</name>
</gene>
<accession>Q5PGC6</accession>
<name>MGSA_SALPA</name>
<protein>
    <recommendedName>
        <fullName evidence="1">Methylglyoxal synthase</fullName>
        <shortName evidence="1">MGS</shortName>
        <ecNumber evidence="1">4.2.3.3</ecNumber>
    </recommendedName>
</protein>
<keyword id="KW-0456">Lyase</keyword>
<dbReference type="EC" id="4.2.3.3" evidence="1"/>
<dbReference type="EMBL" id="CP000026">
    <property type="protein sequence ID" value="AAV77690.1"/>
    <property type="molecule type" value="Genomic_DNA"/>
</dbReference>
<dbReference type="RefSeq" id="WP_000424187.1">
    <property type="nucleotide sequence ID" value="NC_006511.1"/>
</dbReference>
<dbReference type="SMR" id="Q5PGC6"/>
<dbReference type="KEGG" id="spt:SPA1774"/>
<dbReference type="HOGENOM" id="CLU_120420_0_1_6"/>
<dbReference type="Proteomes" id="UP000008185">
    <property type="component" value="Chromosome"/>
</dbReference>
<dbReference type="GO" id="GO:0005829">
    <property type="term" value="C:cytosol"/>
    <property type="evidence" value="ECO:0007669"/>
    <property type="project" value="TreeGrafter"/>
</dbReference>
<dbReference type="GO" id="GO:0008929">
    <property type="term" value="F:methylglyoxal synthase activity"/>
    <property type="evidence" value="ECO:0007669"/>
    <property type="project" value="UniProtKB-UniRule"/>
</dbReference>
<dbReference type="GO" id="GO:0019242">
    <property type="term" value="P:methylglyoxal biosynthetic process"/>
    <property type="evidence" value="ECO:0007669"/>
    <property type="project" value="UniProtKB-UniRule"/>
</dbReference>
<dbReference type="CDD" id="cd01422">
    <property type="entry name" value="MGS"/>
    <property type="match status" value="1"/>
</dbReference>
<dbReference type="FunFam" id="3.40.50.1380:FF:000002">
    <property type="entry name" value="Methylglyoxal synthase"/>
    <property type="match status" value="1"/>
</dbReference>
<dbReference type="Gene3D" id="3.40.50.1380">
    <property type="entry name" value="Methylglyoxal synthase-like domain"/>
    <property type="match status" value="1"/>
</dbReference>
<dbReference type="HAMAP" id="MF_00549">
    <property type="entry name" value="Methylglyoxal_synth"/>
    <property type="match status" value="1"/>
</dbReference>
<dbReference type="InterPro" id="IPR004363">
    <property type="entry name" value="Methylgl_synth"/>
</dbReference>
<dbReference type="InterPro" id="IPR018148">
    <property type="entry name" value="Methylglyoxal_synth_AS"/>
</dbReference>
<dbReference type="InterPro" id="IPR011607">
    <property type="entry name" value="MGS-like_dom"/>
</dbReference>
<dbReference type="InterPro" id="IPR036914">
    <property type="entry name" value="MGS-like_dom_sf"/>
</dbReference>
<dbReference type="NCBIfam" id="TIGR00160">
    <property type="entry name" value="MGSA"/>
    <property type="match status" value="1"/>
</dbReference>
<dbReference type="NCBIfam" id="NF003559">
    <property type="entry name" value="PRK05234.1"/>
    <property type="match status" value="1"/>
</dbReference>
<dbReference type="PANTHER" id="PTHR30492">
    <property type="entry name" value="METHYLGLYOXAL SYNTHASE"/>
    <property type="match status" value="1"/>
</dbReference>
<dbReference type="PANTHER" id="PTHR30492:SF0">
    <property type="entry name" value="METHYLGLYOXAL SYNTHASE"/>
    <property type="match status" value="1"/>
</dbReference>
<dbReference type="Pfam" id="PF02142">
    <property type="entry name" value="MGS"/>
    <property type="match status" value="1"/>
</dbReference>
<dbReference type="PIRSF" id="PIRSF006614">
    <property type="entry name" value="Methylglyox_syn"/>
    <property type="match status" value="1"/>
</dbReference>
<dbReference type="SMART" id="SM00851">
    <property type="entry name" value="MGS"/>
    <property type="match status" value="1"/>
</dbReference>
<dbReference type="SUPFAM" id="SSF52335">
    <property type="entry name" value="Methylglyoxal synthase-like"/>
    <property type="match status" value="1"/>
</dbReference>
<dbReference type="PROSITE" id="PS01335">
    <property type="entry name" value="METHYLGLYOXAL_SYNTH"/>
    <property type="match status" value="1"/>
</dbReference>
<dbReference type="PROSITE" id="PS51855">
    <property type="entry name" value="MGS"/>
    <property type="match status" value="1"/>
</dbReference>
<sequence>MELTTRTLPTRKHIALVAHDHCKQMLMNWVERHQPLLEKHVLYATGTTGNLIQRATGMDVNAMLSGPMGGDQQVGALISEGKIDVLIFFWDPLNAVPHDPDVKALLRLATVWNIPVATNVSTADFIIQSPHFNDAVDILIPDYARYLAERLK</sequence>
<reference key="1">
    <citation type="journal article" date="2004" name="Nat. Genet.">
        <title>Comparison of genome degradation in Paratyphi A and Typhi, human-restricted serovars of Salmonella enterica that cause typhoid.</title>
        <authorList>
            <person name="McClelland M."/>
            <person name="Sanderson K.E."/>
            <person name="Clifton S.W."/>
            <person name="Latreille P."/>
            <person name="Porwollik S."/>
            <person name="Sabo A."/>
            <person name="Meyer R."/>
            <person name="Bieri T."/>
            <person name="Ozersky P."/>
            <person name="McLellan M."/>
            <person name="Harkins C.R."/>
            <person name="Wang C."/>
            <person name="Nguyen C."/>
            <person name="Berghoff A."/>
            <person name="Elliott G."/>
            <person name="Kohlberg S."/>
            <person name="Strong C."/>
            <person name="Du F."/>
            <person name="Carter J."/>
            <person name="Kremizki C."/>
            <person name="Layman D."/>
            <person name="Leonard S."/>
            <person name="Sun H."/>
            <person name="Fulton L."/>
            <person name="Nash W."/>
            <person name="Miner T."/>
            <person name="Minx P."/>
            <person name="Delehaunty K."/>
            <person name="Fronick C."/>
            <person name="Magrini V."/>
            <person name="Nhan M."/>
            <person name="Warren W."/>
            <person name="Florea L."/>
            <person name="Spieth J."/>
            <person name="Wilson R.K."/>
        </authorList>
    </citation>
    <scope>NUCLEOTIDE SEQUENCE [LARGE SCALE GENOMIC DNA]</scope>
    <source>
        <strain>ATCC 9150 / SARB42</strain>
    </source>
</reference>
<proteinExistence type="inferred from homology"/>
<evidence type="ECO:0000255" key="1">
    <source>
        <dbReference type="HAMAP-Rule" id="MF_00549"/>
    </source>
</evidence>
<comment type="function">
    <text evidence="1">Catalyzes the formation of methylglyoxal from dihydroxyacetone phosphate.</text>
</comment>
<comment type="catalytic activity">
    <reaction evidence="1">
        <text>dihydroxyacetone phosphate = methylglyoxal + phosphate</text>
        <dbReference type="Rhea" id="RHEA:17937"/>
        <dbReference type="ChEBI" id="CHEBI:17158"/>
        <dbReference type="ChEBI" id="CHEBI:43474"/>
        <dbReference type="ChEBI" id="CHEBI:57642"/>
        <dbReference type="EC" id="4.2.3.3"/>
    </reaction>
</comment>
<comment type="similarity">
    <text evidence="1">Belongs to the methylglyoxal synthase family.</text>
</comment>
<organism>
    <name type="scientific">Salmonella paratyphi A (strain ATCC 9150 / SARB42)</name>
    <dbReference type="NCBI Taxonomy" id="295319"/>
    <lineage>
        <taxon>Bacteria</taxon>
        <taxon>Pseudomonadati</taxon>
        <taxon>Pseudomonadota</taxon>
        <taxon>Gammaproteobacteria</taxon>
        <taxon>Enterobacterales</taxon>
        <taxon>Enterobacteriaceae</taxon>
        <taxon>Salmonella</taxon>
    </lineage>
</organism>
<feature type="chain" id="PRO_1000017828" description="Methylglyoxal synthase">
    <location>
        <begin position="1"/>
        <end position="152"/>
    </location>
</feature>
<feature type="domain" description="MGS-like" evidence="1">
    <location>
        <begin position="6"/>
        <end position="152"/>
    </location>
</feature>
<feature type="active site" description="Proton donor/acceptor" evidence="1">
    <location>
        <position position="71"/>
    </location>
</feature>
<feature type="binding site" evidence="1">
    <location>
        <position position="19"/>
    </location>
    <ligand>
        <name>substrate</name>
    </ligand>
</feature>
<feature type="binding site" evidence="1">
    <location>
        <position position="23"/>
    </location>
    <ligand>
        <name>substrate</name>
    </ligand>
</feature>
<feature type="binding site" evidence="1">
    <location>
        <begin position="45"/>
        <end position="48"/>
    </location>
    <ligand>
        <name>substrate</name>
    </ligand>
</feature>
<feature type="binding site" evidence="1">
    <location>
        <begin position="65"/>
        <end position="66"/>
    </location>
    <ligand>
        <name>substrate</name>
    </ligand>
</feature>
<feature type="binding site" evidence="1">
    <location>
        <position position="98"/>
    </location>
    <ligand>
        <name>substrate</name>
    </ligand>
</feature>